<evidence type="ECO:0000255" key="1">
    <source>
        <dbReference type="HAMAP-Rule" id="MF_00387"/>
    </source>
</evidence>
<protein>
    <recommendedName>
        <fullName evidence="1">Acyl-[acyl-carrier-protein]--UDP-N-acetylglucosamine O-acyltransferase</fullName>
        <shortName evidence="1">UDP-N-acetylglucosamine acyltransferase</shortName>
        <ecNumber evidence="1">2.3.1.129</ecNumber>
    </recommendedName>
</protein>
<organism>
    <name type="scientific">Methylobacterium radiotolerans (strain ATCC 27329 / DSM 1819 / JCM 2831 / NBRC 15690 / NCIMB 10815 / 0-1)</name>
    <dbReference type="NCBI Taxonomy" id="426355"/>
    <lineage>
        <taxon>Bacteria</taxon>
        <taxon>Pseudomonadati</taxon>
        <taxon>Pseudomonadota</taxon>
        <taxon>Alphaproteobacteria</taxon>
        <taxon>Hyphomicrobiales</taxon>
        <taxon>Methylobacteriaceae</taxon>
        <taxon>Methylobacterium</taxon>
    </lineage>
</organism>
<reference key="1">
    <citation type="submission" date="2008-03" db="EMBL/GenBank/DDBJ databases">
        <title>Complete sequence of chromosome of Methylobacterium radiotolerans JCM 2831.</title>
        <authorList>
            <consortium name="US DOE Joint Genome Institute"/>
            <person name="Copeland A."/>
            <person name="Lucas S."/>
            <person name="Lapidus A."/>
            <person name="Glavina del Rio T."/>
            <person name="Dalin E."/>
            <person name="Tice H."/>
            <person name="Bruce D."/>
            <person name="Goodwin L."/>
            <person name="Pitluck S."/>
            <person name="Kiss H."/>
            <person name="Brettin T."/>
            <person name="Detter J.C."/>
            <person name="Han C."/>
            <person name="Kuske C.R."/>
            <person name="Schmutz J."/>
            <person name="Larimer F."/>
            <person name="Land M."/>
            <person name="Hauser L."/>
            <person name="Kyrpides N."/>
            <person name="Mikhailova N."/>
            <person name="Marx C.J."/>
            <person name="Richardson P."/>
        </authorList>
    </citation>
    <scope>NUCLEOTIDE SEQUENCE [LARGE SCALE GENOMIC DNA]</scope>
    <source>
        <strain>ATCC 27329 / DSM 1819 / JCM 2831 / NBRC 15690 / NCIMB 10815 / 0-1</strain>
    </source>
</reference>
<sequence>MTAPAIHPSAVIESGARIGDGARIGPFCHVGPEVVLGADCELISHVVLAGRTTIGPRTRIFPFASIGHQPQDLKYRGEASTLTIGADCLIREGVTMNPGTSGGGLETLVGDHCTFLANSHVGHDCRVGAHVIFSNNVMLAGHCSVGDYAILGGGAAVIQFARVGAHAFVGGLSGLENDCIPYGMVLGNRAYLSGLNIIGLQRRGFAREDIHALRRAYRLLFAPEGTLMERVEDVAATFESHAAVAEILDFIRLGGKRSICTPREVPTPISAA</sequence>
<dbReference type="EC" id="2.3.1.129" evidence="1"/>
<dbReference type="EMBL" id="CP001001">
    <property type="protein sequence ID" value="ACB25413.1"/>
    <property type="molecule type" value="Genomic_DNA"/>
</dbReference>
<dbReference type="RefSeq" id="WP_012320376.1">
    <property type="nucleotide sequence ID" value="NC_010505.1"/>
</dbReference>
<dbReference type="SMR" id="B1LTP4"/>
<dbReference type="STRING" id="426355.Mrad2831_3436"/>
<dbReference type="GeneID" id="6139484"/>
<dbReference type="KEGG" id="mrd:Mrad2831_3436"/>
<dbReference type="eggNOG" id="COG1043">
    <property type="taxonomic scope" value="Bacteria"/>
</dbReference>
<dbReference type="HOGENOM" id="CLU_061249_0_0_5"/>
<dbReference type="OrthoDB" id="9807278at2"/>
<dbReference type="UniPathway" id="UPA00359">
    <property type="reaction ID" value="UER00477"/>
</dbReference>
<dbReference type="Proteomes" id="UP000006589">
    <property type="component" value="Chromosome"/>
</dbReference>
<dbReference type="GO" id="GO:0005737">
    <property type="term" value="C:cytoplasm"/>
    <property type="evidence" value="ECO:0007669"/>
    <property type="project" value="UniProtKB-SubCell"/>
</dbReference>
<dbReference type="GO" id="GO:0016020">
    <property type="term" value="C:membrane"/>
    <property type="evidence" value="ECO:0007669"/>
    <property type="project" value="GOC"/>
</dbReference>
<dbReference type="GO" id="GO:0008780">
    <property type="term" value="F:acyl-[acyl-carrier-protein]-UDP-N-acetylglucosamine O-acyltransferase activity"/>
    <property type="evidence" value="ECO:0007669"/>
    <property type="project" value="UniProtKB-UniRule"/>
</dbReference>
<dbReference type="GO" id="GO:0009245">
    <property type="term" value="P:lipid A biosynthetic process"/>
    <property type="evidence" value="ECO:0007669"/>
    <property type="project" value="UniProtKB-UniRule"/>
</dbReference>
<dbReference type="CDD" id="cd03351">
    <property type="entry name" value="LbH_UDP-GlcNAc_AT"/>
    <property type="match status" value="1"/>
</dbReference>
<dbReference type="Gene3D" id="2.160.10.10">
    <property type="entry name" value="Hexapeptide repeat proteins"/>
    <property type="match status" value="1"/>
</dbReference>
<dbReference type="Gene3D" id="1.20.1180.10">
    <property type="entry name" value="Udp N-acetylglucosamine O-acyltransferase, C-terminal domain"/>
    <property type="match status" value="1"/>
</dbReference>
<dbReference type="HAMAP" id="MF_00387">
    <property type="entry name" value="LpxA"/>
    <property type="match status" value="1"/>
</dbReference>
<dbReference type="InterPro" id="IPR029098">
    <property type="entry name" value="Acetyltransf_C"/>
</dbReference>
<dbReference type="InterPro" id="IPR037157">
    <property type="entry name" value="Acetyltransf_C_sf"/>
</dbReference>
<dbReference type="InterPro" id="IPR001451">
    <property type="entry name" value="Hexapep"/>
</dbReference>
<dbReference type="InterPro" id="IPR010137">
    <property type="entry name" value="Lipid_A_LpxA"/>
</dbReference>
<dbReference type="InterPro" id="IPR011004">
    <property type="entry name" value="Trimer_LpxA-like_sf"/>
</dbReference>
<dbReference type="NCBIfam" id="TIGR01852">
    <property type="entry name" value="lipid_A_lpxA"/>
    <property type="match status" value="1"/>
</dbReference>
<dbReference type="NCBIfam" id="NF003657">
    <property type="entry name" value="PRK05289.1"/>
    <property type="match status" value="1"/>
</dbReference>
<dbReference type="PANTHER" id="PTHR43480">
    <property type="entry name" value="ACYL-[ACYL-CARRIER-PROTEIN]--UDP-N-ACETYLGLUCOSAMINE O-ACYLTRANSFERASE"/>
    <property type="match status" value="1"/>
</dbReference>
<dbReference type="PANTHER" id="PTHR43480:SF1">
    <property type="entry name" value="ACYL-[ACYL-CARRIER-PROTEIN]--UDP-N-ACETYLGLUCOSAMINE O-ACYLTRANSFERASE, MITOCHONDRIAL-RELATED"/>
    <property type="match status" value="1"/>
</dbReference>
<dbReference type="Pfam" id="PF13720">
    <property type="entry name" value="Acetyltransf_11"/>
    <property type="match status" value="1"/>
</dbReference>
<dbReference type="Pfam" id="PF00132">
    <property type="entry name" value="Hexapep"/>
    <property type="match status" value="2"/>
</dbReference>
<dbReference type="PIRSF" id="PIRSF000456">
    <property type="entry name" value="UDP-GlcNAc_acltr"/>
    <property type="match status" value="1"/>
</dbReference>
<dbReference type="SUPFAM" id="SSF51161">
    <property type="entry name" value="Trimeric LpxA-like enzymes"/>
    <property type="match status" value="1"/>
</dbReference>
<gene>
    <name evidence="1" type="primary">lpxA</name>
    <name type="ordered locus">Mrad2831_3436</name>
</gene>
<feature type="chain" id="PRO_1000122715" description="Acyl-[acyl-carrier-protein]--UDP-N-acetylglucosamine O-acyltransferase">
    <location>
        <begin position="1"/>
        <end position="272"/>
    </location>
</feature>
<accession>B1LTP4</accession>
<comment type="function">
    <text evidence="1">Involved in the biosynthesis of lipid A, a phosphorylated glycolipid that anchors the lipopolysaccharide to the outer membrane of the cell.</text>
</comment>
<comment type="catalytic activity">
    <reaction evidence="1">
        <text>a (3R)-hydroxyacyl-[ACP] + UDP-N-acetyl-alpha-D-glucosamine = a UDP-3-O-[(3R)-3-hydroxyacyl]-N-acetyl-alpha-D-glucosamine + holo-[ACP]</text>
        <dbReference type="Rhea" id="RHEA:67812"/>
        <dbReference type="Rhea" id="RHEA-COMP:9685"/>
        <dbReference type="Rhea" id="RHEA-COMP:9945"/>
        <dbReference type="ChEBI" id="CHEBI:57705"/>
        <dbReference type="ChEBI" id="CHEBI:64479"/>
        <dbReference type="ChEBI" id="CHEBI:78827"/>
        <dbReference type="ChEBI" id="CHEBI:173225"/>
        <dbReference type="EC" id="2.3.1.129"/>
    </reaction>
</comment>
<comment type="pathway">
    <text evidence="1">Glycolipid biosynthesis; lipid IV(A) biosynthesis; lipid IV(A) from (3R)-3-hydroxytetradecanoyl-[acyl-carrier-protein] and UDP-N-acetyl-alpha-D-glucosamine: step 1/6.</text>
</comment>
<comment type="subunit">
    <text evidence="1">Homotrimer.</text>
</comment>
<comment type="subcellular location">
    <subcellularLocation>
        <location evidence="1">Cytoplasm</location>
    </subcellularLocation>
</comment>
<comment type="similarity">
    <text evidence="1">Belongs to the transferase hexapeptide repeat family. LpxA subfamily.</text>
</comment>
<keyword id="KW-0012">Acyltransferase</keyword>
<keyword id="KW-0963">Cytoplasm</keyword>
<keyword id="KW-0441">Lipid A biosynthesis</keyword>
<keyword id="KW-0444">Lipid biosynthesis</keyword>
<keyword id="KW-0443">Lipid metabolism</keyword>
<keyword id="KW-0677">Repeat</keyword>
<keyword id="KW-0808">Transferase</keyword>
<proteinExistence type="inferred from homology"/>
<name>LPXA_METRJ</name>